<reference key="1">
    <citation type="journal article" date="2007" name="PLoS Genet.">
        <title>A tale of two oxidation states: bacterial colonization of arsenic-rich environments.</title>
        <authorList>
            <person name="Muller D."/>
            <person name="Medigue C."/>
            <person name="Koechler S."/>
            <person name="Barbe V."/>
            <person name="Barakat M."/>
            <person name="Talla E."/>
            <person name="Bonnefoy V."/>
            <person name="Krin E."/>
            <person name="Arsene-Ploetze F."/>
            <person name="Carapito C."/>
            <person name="Chandler M."/>
            <person name="Cournoyer B."/>
            <person name="Cruveiller S."/>
            <person name="Dossat C."/>
            <person name="Duval S."/>
            <person name="Heymann M."/>
            <person name="Leize E."/>
            <person name="Lieutaud A."/>
            <person name="Lievremont D."/>
            <person name="Makita Y."/>
            <person name="Mangenot S."/>
            <person name="Nitschke W."/>
            <person name="Ortet P."/>
            <person name="Perdrial N."/>
            <person name="Schoepp B."/>
            <person name="Siguier P."/>
            <person name="Simeonova D.D."/>
            <person name="Rouy Z."/>
            <person name="Segurens B."/>
            <person name="Turlin E."/>
            <person name="Vallenet D."/>
            <person name="van Dorsselaer A."/>
            <person name="Weiss S."/>
            <person name="Weissenbach J."/>
            <person name="Lett M.-C."/>
            <person name="Danchin A."/>
            <person name="Bertin P.N."/>
        </authorList>
    </citation>
    <scope>NUCLEOTIDE SEQUENCE [LARGE SCALE GENOMIC DNA]</scope>
    <source>
        <strain>ULPAs1</strain>
    </source>
</reference>
<dbReference type="EMBL" id="CU207211">
    <property type="protein sequence ID" value="CAL61509.1"/>
    <property type="molecule type" value="Genomic_DNA"/>
</dbReference>
<dbReference type="SMR" id="A4G4S2"/>
<dbReference type="STRING" id="204773.HEAR1336"/>
<dbReference type="KEGG" id="har:HEAR1336"/>
<dbReference type="eggNOG" id="COG0264">
    <property type="taxonomic scope" value="Bacteria"/>
</dbReference>
<dbReference type="HOGENOM" id="CLU_047155_0_2_4"/>
<dbReference type="OrthoDB" id="9808348at2"/>
<dbReference type="Proteomes" id="UP000006697">
    <property type="component" value="Chromosome"/>
</dbReference>
<dbReference type="GO" id="GO:0005737">
    <property type="term" value="C:cytoplasm"/>
    <property type="evidence" value="ECO:0007669"/>
    <property type="project" value="UniProtKB-SubCell"/>
</dbReference>
<dbReference type="GO" id="GO:0003746">
    <property type="term" value="F:translation elongation factor activity"/>
    <property type="evidence" value="ECO:0007669"/>
    <property type="project" value="UniProtKB-UniRule"/>
</dbReference>
<dbReference type="CDD" id="cd14275">
    <property type="entry name" value="UBA_EF-Ts"/>
    <property type="match status" value="1"/>
</dbReference>
<dbReference type="FunFam" id="1.10.286.20:FF:000001">
    <property type="entry name" value="Elongation factor Ts"/>
    <property type="match status" value="1"/>
</dbReference>
<dbReference type="FunFam" id="1.10.8.10:FF:000001">
    <property type="entry name" value="Elongation factor Ts"/>
    <property type="match status" value="1"/>
</dbReference>
<dbReference type="Gene3D" id="1.10.286.20">
    <property type="match status" value="1"/>
</dbReference>
<dbReference type="Gene3D" id="1.10.8.10">
    <property type="entry name" value="DNA helicase RuvA subunit, C-terminal domain"/>
    <property type="match status" value="1"/>
</dbReference>
<dbReference type="Gene3D" id="3.30.479.20">
    <property type="entry name" value="Elongation factor Ts, dimerisation domain"/>
    <property type="match status" value="2"/>
</dbReference>
<dbReference type="HAMAP" id="MF_00050">
    <property type="entry name" value="EF_Ts"/>
    <property type="match status" value="1"/>
</dbReference>
<dbReference type="InterPro" id="IPR036402">
    <property type="entry name" value="EF-Ts_dimer_sf"/>
</dbReference>
<dbReference type="InterPro" id="IPR001816">
    <property type="entry name" value="Transl_elong_EFTs/EF1B"/>
</dbReference>
<dbReference type="InterPro" id="IPR014039">
    <property type="entry name" value="Transl_elong_EFTs/EF1B_dimer"/>
</dbReference>
<dbReference type="InterPro" id="IPR018101">
    <property type="entry name" value="Transl_elong_Ts_CS"/>
</dbReference>
<dbReference type="InterPro" id="IPR009060">
    <property type="entry name" value="UBA-like_sf"/>
</dbReference>
<dbReference type="NCBIfam" id="TIGR00116">
    <property type="entry name" value="tsf"/>
    <property type="match status" value="1"/>
</dbReference>
<dbReference type="PANTHER" id="PTHR11741">
    <property type="entry name" value="ELONGATION FACTOR TS"/>
    <property type="match status" value="1"/>
</dbReference>
<dbReference type="PANTHER" id="PTHR11741:SF0">
    <property type="entry name" value="ELONGATION FACTOR TS, MITOCHONDRIAL"/>
    <property type="match status" value="1"/>
</dbReference>
<dbReference type="Pfam" id="PF00889">
    <property type="entry name" value="EF_TS"/>
    <property type="match status" value="1"/>
</dbReference>
<dbReference type="SUPFAM" id="SSF54713">
    <property type="entry name" value="Elongation factor Ts (EF-Ts), dimerisation domain"/>
    <property type="match status" value="2"/>
</dbReference>
<dbReference type="SUPFAM" id="SSF46934">
    <property type="entry name" value="UBA-like"/>
    <property type="match status" value="1"/>
</dbReference>
<dbReference type="PROSITE" id="PS01127">
    <property type="entry name" value="EF_TS_2"/>
    <property type="match status" value="1"/>
</dbReference>
<sequence>MAVITAAMVGELRALTDAPMMECKKALTEADGDPVKAEEILRVKLGSKASKAASRVTAEGVVASCVVGNVGALVEVNCETDFVTKNDEFLALANACAKLIAEHNPADLAALGALPLDGKTLEEKRAELIGRIGENMSIRRFVRFETAGKVVSYLHGTRIGVMVDFDAADEQVGKDVAMHIAAMKPVALSSDDVPADLIAKERSVAELKAAESGKPAEIVTKMVEGSVHKYLKEVSLLNQTFVKNDKQTVEQMLKDTKSTVKAFTMYVVGEGIEKKQDDFAAEVAAQVAAAKQA</sequence>
<feature type="chain" id="PRO_1000006108" description="Elongation factor Ts">
    <location>
        <begin position="1"/>
        <end position="293"/>
    </location>
</feature>
<feature type="region of interest" description="Involved in Mg(2+) ion dislocation from EF-Tu" evidence="1">
    <location>
        <begin position="80"/>
        <end position="83"/>
    </location>
</feature>
<gene>
    <name evidence="1" type="primary">tsf</name>
    <name type="ordered locus">HEAR1336</name>
</gene>
<accession>A4G4S2</accession>
<comment type="function">
    <text evidence="1">Associates with the EF-Tu.GDP complex and induces the exchange of GDP to GTP. It remains bound to the aminoacyl-tRNA.EF-Tu.GTP complex up to the GTP hydrolysis stage on the ribosome.</text>
</comment>
<comment type="subcellular location">
    <subcellularLocation>
        <location evidence="1">Cytoplasm</location>
    </subcellularLocation>
</comment>
<comment type="similarity">
    <text evidence="1">Belongs to the EF-Ts family.</text>
</comment>
<evidence type="ECO:0000255" key="1">
    <source>
        <dbReference type="HAMAP-Rule" id="MF_00050"/>
    </source>
</evidence>
<protein>
    <recommendedName>
        <fullName evidence="1">Elongation factor Ts</fullName>
        <shortName evidence="1">EF-Ts</shortName>
    </recommendedName>
</protein>
<organism>
    <name type="scientific">Herminiimonas arsenicoxydans</name>
    <dbReference type="NCBI Taxonomy" id="204773"/>
    <lineage>
        <taxon>Bacteria</taxon>
        <taxon>Pseudomonadati</taxon>
        <taxon>Pseudomonadota</taxon>
        <taxon>Betaproteobacteria</taxon>
        <taxon>Burkholderiales</taxon>
        <taxon>Oxalobacteraceae</taxon>
        <taxon>Herminiimonas</taxon>
    </lineage>
</organism>
<keyword id="KW-0963">Cytoplasm</keyword>
<keyword id="KW-0251">Elongation factor</keyword>
<keyword id="KW-0648">Protein biosynthesis</keyword>
<keyword id="KW-1185">Reference proteome</keyword>
<proteinExistence type="inferred from homology"/>
<name>EFTS_HERAR</name>